<comment type="function">
    <text evidence="1">Together with the chaperonin GroEL, plays an essential role in assisting protein folding. The GroEL-GroES system forms a nano-cage that allows encapsulation of the non-native substrate proteins and provides a physical environment optimized to promote and accelerate protein folding. GroES binds to the apical surface of the GroEL ring, thereby capping the opening of the GroEL channel.</text>
</comment>
<comment type="subunit">
    <text evidence="1">Heptamer of 7 subunits arranged in a ring. Interacts with the chaperonin GroEL.</text>
</comment>
<comment type="subcellular location">
    <subcellularLocation>
        <location evidence="1">Cytoplasm</location>
    </subcellularLocation>
</comment>
<comment type="similarity">
    <text evidence="1">Belongs to the GroES chaperonin family.</text>
</comment>
<protein>
    <recommendedName>
        <fullName evidence="1">Co-chaperonin GroES</fullName>
    </recommendedName>
    <alternativeName>
        <fullName evidence="1">10 kDa chaperonin</fullName>
    </alternativeName>
    <alternativeName>
        <fullName evidence="1">Chaperonin-10</fullName>
        <shortName evidence="1">Cpn10</shortName>
    </alternativeName>
</protein>
<reference key="1">
    <citation type="journal article" date="2007" name="PLoS ONE">
        <title>Molecular correlates of host specialization in Staphylococcus aureus.</title>
        <authorList>
            <person name="Herron-Olson L."/>
            <person name="Fitzgerald J.R."/>
            <person name="Musser J.M."/>
            <person name="Kapur V."/>
        </authorList>
    </citation>
    <scope>NUCLEOTIDE SEQUENCE [LARGE SCALE GENOMIC DNA]</scope>
    <source>
        <strain>bovine RF122 / ET3-1</strain>
    </source>
</reference>
<evidence type="ECO:0000255" key="1">
    <source>
        <dbReference type="HAMAP-Rule" id="MF_00580"/>
    </source>
</evidence>
<dbReference type="EMBL" id="AJ938182">
    <property type="protein sequence ID" value="CAI81603.1"/>
    <property type="molecule type" value="Genomic_DNA"/>
</dbReference>
<dbReference type="RefSeq" id="WP_000917289.1">
    <property type="nucleotide sequence ID" value="NC_007622.1"/>
</dbReference>
<dbReference type="SMR" id="Q2YUD7"/>
<dbReference type="GeneID" id="98346332"/>
<dbReference type="KEGG" id="sab:SAB1914c"/>
<dbReference type="HOGENOM" id="CLU_132825_2_1_9"/>
<dbReference type="GO" id="GO:0005737">
    <property type="term" value="C:cytoplasm"/>
    <property type="evidence" value="ECO:0007669"/>
    <property type="project" value="UniProtKB-SubCell"/>
</dbReference>
<dbReference type="GO" id="GO:0005524">
    <property type="term" value="F:ATP binding"/>
    <property type="evidence" value="ECO:0007669"/>
    <property type="project" value="InterPro"/>
</dbReference>
<dbReference type="GO" id="GO:0046872">
    <property type="term" value="F:metal ion binding"/>
    <property type="evidence" value="ECO:0007669"/>
    <property type="project" value="TreeGrafter"/>
</dbReference>
<dbReference type="GO" id="GO:0044183">
    <property type="term" value="F:protein folding chaperone"/>
    <property type="evidence" value="ECO:0007669"/>
    <property type="project" value="InterPro"/>
</dbReference>
<dbReference type="GO" id="GO:0051087">
    <property type="term" value="F:protein-folding chaperone binding"/>
    <property type="evidence" value="ECO:0007669"/>
    <property type="project" value="TreeGrafter"/>
</dbReference>
<dbReference type="GO" id="GO:0051082">
    <property type="term" value="F:unfolded protein binding"/>
    <property type="evidence" value="ECO:0007669"/>
    <property type="project" value="TreeGrafter"/>
</dbReference>
<dbReference type="GO" id="GO:0051085">
    <property type="term" value="P:chaperone cofactor-dependent protein refolding"/>
    <property type="evidence" value="ECO:0007669"/>
    <property type="project" value="TreeGrafter"/>
</dbReference>
<dbReference type="CDD" id="cd00320">
    <property type="entry name" value="cpn10"/>
    <property type="match status" value="1"/>
</dbReference>
<dbReference type="FunFam" id="2.30.33.40:FF:000001">
    <property type="entry name" value="10 kDa chaperonin"/>
    <property type="match status" value="1"/>
</dbReference>
<dbReference type="Gene3D" id="2.30.33.40">
    <property type="entry name" value="GroES chaperonin"/>
    <property type="match status" value="1"/>
</dbReference>
<dbReference type="HAMAP" id="MF_00580">
    <property type="entry name" value="CH10"/>
    <property type="match status" value="1"/>
</dbReference>
<dbReference type="InterPro" id="IPR020818">
    <property type="entry name" value="Chaperonin_GroES"/>
</dbReference>
<dbReference type="InterPro" id="IPR037124">
    <property type="entry name" value="Chaperonin_GroES_sf"/>
</dbReference>
<dbReference type="InterPro" id="IPR018369">
    <property type="entry name" value="Chaprnonin_Cpn10_CS"/>
</dbReference>
<dbReference type="InterPro" id="IPR011032">
    <property type="entry name" value="GroES-like_sf"/>
</dbReference>
<dbReference type="NCBIfam" id="NF001531">
    <property type="entry name" value="PRK00364.2-2"/>
    <property type="match status" value="1"/>
</dbReference>
<dbReference type="NCBIfam" id="NF001532">
    <property type="entry name" value="PRK00364.2-3"/>
    <property type="match status" value="1"/>
</dbReference>
<dbReference type="NCBIfam" id="NF001533">
    <property type="entry name" value="PRK00364.2-4"/>
    <property type="match status" value="1"/>
</dbReference>
<dbReference type="NCBIfam" id="NF001534">
    <property type="entry name" value="PRK00364.2-5"/>
    <property type="match status" value="1"/>
</dbReference>
<dbReference type="PANTHER" id="PTHR10772">
    <property type="entry name" value="10 KDA HEAT SHOCK PROTEIN"/>
    <property type="match status" value="1"/>
</dbReference>
<dbReference type="PANTHER" id="PTHR10772:SF58">
    <property type="entry name" value="CO-CHAPERONIN GROES"/>
    <property type="match status" value="1"/>
</dbReference>
<dbReference type="Pfam" id="PF00166">
    <property type="entry name" value="Cpn10"/>
    <property type="match status" value="1"/>
</dbReference>
<dbReference type="PRINTS" id="PR00297">
    <property type="entry name" value="CHAPERONIN10"/>
</dbReference>
<dbReference type="SMART" id="SM00883">
    <property type="entry name" value="Cpn10"/>
    <property type="match status" value="1"/>
</dbReference>
<dbReference type="SUPFAM" id="SSF50129">
    <property type="entry name" value="GroES-like"/>
    <property type="match status" value="1"/>
</dbReference>
<dbReference type="PROSITE" id="PS00681">
    <property type="entry name" value="CHAPERONINS_CPN10"/>
    <property type="match status" value="1"/>
</dbReference>
<sequence length="94" mass="10416">MLKPIGNRVIIEKKEQEQTTKSGIVLTDSAKEKSNEGVIVAVGTGRLLNDGTRVTPEVKEGDRVVFQQYAGTEVKRDNETYLVLNEEDILAVIE</sequence>
<accession>Q2YUD7</accession>
<organism>
    <name type="scientific">Staphylococcus aureus (strain bovine RF122 / ET3-1)</name>
    <dbReference type="NCBI Taxonomy" id="273036"/>
    <lineage>
        <taxon>Bacteria</taxon>
        <taxon>Bacillati</taxon>
        <taxon>Bacillota</taxon>
        <taxon>Bacilli</taxon>
        <taxon>Bacillales</taxon>
        <taxon>Staphylococcaceae</taxon>
        <taxon>Staphylococcus</taxon>
    </lineage>
</organism>
<gene>
    <name evidence="1" type="primary">groES</name>
    <name evidence="1" type="synonym">groS</name>
    <name type="ordered locus">SAB1914c</name>
</gene>
<proteinExistence type="inferred from homology"/>
<feature type="chain" id="PRO_1000025378" description="Co-chaperonin GroES">
    <location>
        <begin position="1"/>
        <end position="94"/>
    </location>
</feature>
<name>CH10_STAAB</name>
<keyword id="KW-0143">Chaperone</keyword>
<keyword id="KW-0963">Cytoplasm</keyword>
<keyword id="KW-0346">Stress response</keyword>